<name>M1_I77AB</name>
<reference key="1">
    <citation type="journal article" date="1985" name="Bioorg. Khim.">
        <title>Primary structure of fragment 7 of the influenza virus A/USSR/90/77(H1N1) RNA.</title>
        <authorList>
            <person name="Samokhvalov E.I."/>
            <person name="Kongenov V.A."/>
            <person name="Chizhikov V.E."/>
            <person name="Blinov V.M."/>
            <person name="Yuferov V.P."/>
            <person name="Vasilenko S.K."/>
            <person name="Uryvaev L.V."/>
            <person name="Zhdanov V.M."/>
        </authorList>
    </citation>
    <scope>NUCLEOTIDE SEQUENCE [GENOMIC RNA]</scope>
</reference>
<reference key="2">
    <citation type="submission" date="2006-03" db="EMBL/GenBank/DDBJ databases">
        <title>The NIAID influenza genome sequencing project.</title>
        <authorList>
            <person name="Ghedin E."/>
            <person name="Spiro D."/>
            <person name="Miller N."/>
            <person name="Zaborsky J."/>
            <person name="Feldblyum T."/>
            <person name="Subbu V."/>
            <person name="Shumway M."/>
            <person name="Sparenborg J."/>
            <person name="Groveman L."/>
            <person name="Halpin R."/>
            <person name="Sitz J."/>
            <person name="Koo H."/>
            <person name="Salzberg S.L."/>
            <person name="Webster R.G."/>
            <person name="Hoffmann E."/>
            <person name="Krauss S."/>
            <person name="Naeve C."/>
            <person name="Bao Y."/>
            <person name="Bolotov P."/>
            <person name="Dernovoy D."/>
            <person name="Kiryutin B."/>
            <person name="Lipman D.J."/>
            <person name="Tatusova T."/>
        </authorList>
    </citation>
    <scope>NUCLEOTIDE SEQUENCE [GENOMIC RNA]</scope>
</reference>
<reference key="3">
    <citation type="submission" date="2006-04" db="EMBL/GenBank/DDBJ databases">
        <title>Complete genome sequencing and analysis of selected influenza virus vaccine strains spanning six decades (1933-1999).</title>
        <authorList>
            <person name="Mbawuike I.N."/>
            <person name="Zhang Y."/>
            <person name="Yamada R.E."/>
            <person name="Nino D."/>
            <person name="Bui H.-H."/>
            <person name="Sette A."/>
            <person name="Couch R.B."/>
        </authorList>
    </citation>
    <scope>NUCLEOTIDE SEQUENCE [GENOMIC RNA]</scope>
</reference>
<sequence>MSLLTEVETYVLSIVPSGPLKAEIAQRLEDVFAGKNTDLEALMEWLKTRPILSPLTKGILGFVFTLTVPSERGLQRRRFVQNALNGNGDPNNMDRAVKLYRKLKREITFHGAKEIALSYSAGALASCMGLIYNRMGAVTTEAAFGLICATCEQIADSQHRSHRQMVTTTNPLIRHENRMVLASTTAKAMEQMAGSSEQAAEAMEVASQARQMVQAMRAIGTHPSSSAGLKNDLLENLQAYQKRMGVQMQRFK</sequence>
<comment type="function">
    <text evidence="1">Plays critical roles in virus replication, from virus entry and uncoating to assembly and budding of the virus particle. M1 binding to ribonucleocapsids (RNPs) in nucleus seems to inhibit viral transcription. Interaction of viral NEP with M1-RNP is thought to promote nuclear export of the complex, which is targeted to the virion assembly site at the apical plasma membrane in polarized epithelial cells. Interactions with NA and HA may bring M1, a non-raft-associated protein, into lipid rafts. Forms a continuous shell on the inner side of the lipid bilayer in virion, where it binds the RNP. During virus entry into cell, the M2 ion channel acidifies the internal virion core, inducing M1 dissociation from the RNP. M1-free RNPs are transported to the nucleus, where viral transcription and replication can take place.</text>
</comment>
<comment type="function">
    <text evidence="1">Determines the virion's shape: spherical or filamentous. Clinical isolates of influenza are characterized by the presence of significant proportion of filamentous virions, whereas after multiple passage on eggs or cell culture, virions have only spherical morphology. Filamentous virions are thought to be important to infect neighboring cells, and spherical virions more suited to spread through aerosol between hosts organisms.</text>
</comment>
<comment type="subunit">
    <text evidence="1">Homodimer and homomultimer. Interacts with NEP. Binds ribonucleocapsid by both interacting with genomic RNA and NP protein. May interact with HA and NA. Cannot bind NP without genomic RNA.</text>
</comment>
<comment type="subcellular location">
    <subcellularLocation>
        <location evidence="1">Virion membrane</location>
        <topology evidence="1">Peripheral membrane protein</topology>
        <orientation evidence="1">Cytoplasmic side</orientation>
    </subcellularLocation>
    <subcellularLocation>
        <location evidence="1">Host nucleus</location>
    </subcellularLocation>
</comment>
<comment type="alternative products">
    <event type="alternative splicing"/>
    <isoform>
        <id>P35937-1</id>
        <name>M1</name>
        <sequence type="displayed"/>
    </isoform>
    <isoform>
        <id>P35938-1</id>
        <name>M2</name>
        <sequence type="external"/>
    </isoform>
    <text>Only the first 9 residues are shared by the 2 isoforms.</text>
</comment>
<comment type="miscellaneous">
    <text evidence="1">Most abundant protein in virion. When expressed alone can form virus-like particles in transfected cells.</text>
</comment>
<comment type="similarity">
    <text evidence="1">Belongs to the influenza viruses Matrix protein M1 family.</text>
</comment>
<accession>P35937</accession>
<accession>Q1WP07</accession>
<organism>
    <name type="scientific">Influenza A virus (strain A/USSR/90/1977 H1N1)</name>
    <dbReference type="NCBI Taxonomy" id="381516"/>
    <lineage>
        <taxon>Viruses</taxon>
        <taxon>Riboviria</taxon>
        <taxon>Orthornavirae</taxon>
        <taxon>Negarnaviricota</taxon>
        <taxon>Polyploviricotina</taxon>
        <taxon>Insthoviricetes</taxon>
        <taxon>Articulavirales</taxon>
        <taxon>Orthomyxoviridae</taxon>
        <taxon>Alphainfluenzavirus</taxon>
        <taxon>Alphainfluenzavirus influenzae</taxon>
        <taxon>Influenza A virus</taxon>
    </lineage>
</organism>
<feature type="chain" id="PRO_0000078867" description="Matrix protein 1">
    <location>
        <begin position="1"/>
        <end position="252"/>
    </location>
</feature>
<feature type="region of interest" description="Membrane-binding" evidence="1">
    <location>
        <begin position="1"/>
        <end position="164"/>
    </location>
</feature>
<feature type="region of interest" description="RNP-binding" evidence="1">
    <location>
        <begin position="165"/>
        <end position="252"/>
    </location>
</feature>
<feature type="short sequence motif" description="Nuclear localization signal" evidence="1">
    <location>
        <begin position="101"/>
        <end position="105"/>
    </location>
</feature>
<organismHost>
    <name type="scientific">Aves</name>
    <dbReference type="NCBI Taxonomy" id="8782"/>
</organismHost>
<organismHost>
    <name type="scientific">Homo sapiens</name>
    <name type="common">Human</name>
    <dbReference type="NCBI Taxonomy" id="9606"/>
</organismHost>
<organismHost>
    <name type="scientific">Sus scrofa</name>
    <name type="common">Pig</name>
    <dbReference type="NCBI Taxonomy" id="9823"/>
</organismHost>
<proteinExistence type="inferred from homology"/>
<gene>
    <name evidence="1" type="primary">M</name>
</gene>
<keyword id="KW-0025">Alternative splicing</keyword>
<keyword id="KW-1048">Host nucleus</keyword>
<keyword id="KW-0472">Membrane</keyword>
<keyword id="KW-0694">RNA-binding</keyword>
<keyword id="KW-0468">Viral matrix protein</keyword>
<keyword id="KW-0946">Virion</keyword>
<dbReference type="EMBL" id="X53029">
    <property type="protein sequence ID" value="CAA37200.1"/>
    <property type="molecule type" value="Genomic_RNA"/>
</dbReference>
<dbReference type="EMBL" id="CY010373">
    <property type="protein sequence ID" value="ABD95351.1"/>
    <property type="molecule type" value="Genomic_RNA"/>
</dbReference>
<dbReference type="EMBL" id="DQ508900">
    <property type="protein sequence ID" value="ABF21314.1"/>
    <property type="molecule type" value="Genomic_RNA"/>
</dbReference>
<dbReference type="SMR" id="P35937"/>
<dbReference type="Proteomes" id="UP000007793">
    <property type="component" value="Genome"/>
</dbReference>
<dbReference type="Proteomes" id="UP000121508">
    <property type="component" value="Genome"/>
</dbReference>
<dbReference type="GO" id="GO:0042025">
    <property type="term" value="C:host cell nucleus"/>
    <property type="evidence" value="ECO:0007669"/>
    <property type="project" value="UniProtKB-SubCell"/>
</dbReference>
<dbReference type="GO" id="GO:0016020">
    <property type="term" value="C:membrane"/>
    <property type="evidence" value="ECO:0007669"/>
    <property type="project" value="UniProtKB-KW"/>
</dbReference>
<dbReference type="GO" id="GO:0055036">
    <property type="term" value="C:virion membrane"/>
    <property type="evidence" value="ECO:0007669"/>
    <property type="project" value="UniProtKB-SubCell"/>
</dbReference>
<dbReference type="GO" id="GO:0003723">
    <property type="term" value="F:RNA binding"/>
    <property type="evidence" value="ECO:0007669"/>
    <property type="project" value="UniProtKB-UniRule"/>
</dbReference>
<dbReference type="GO" id="GO:0039660">
    <property type="term" value="F:structural constituent of virion"/>
    <property type="evidence" value="ECO:0007669"/>
    <property type="project" value="UniProtKB-UniRule"/>
</dbReference>
<dbReference type="GO" id="GO:0046761">
    <property type="term" value="P:viral budding from plasma membrane"/>
    <property type="evidence" value="ECO:0007669"/>
    <property type="project" value="UniProtKB-UniRule"/>
</dbReference>
<dbReference type="FunFam" id="1.10.10.180:FF:000001">
    <property type="entry name" value="Matrix protein 1"/>
    <property type="match status" value="1"/>
</dbReference>
<dbReference type="FunFam" id="1.20.91.10:FF:000001">
    <property type="entry name" value="Matrix protein 1"/>
    <property type="match status" value="1"/>
</dbReference>
<dbReference type="Gene3D" id="1.10.10.180">
    <property type="match status" value="1"/>
</dbReference>
<dbReference type="Gene3D" id="1.20.91.10">
    <property type="match status" value="1"/>
</dbReference>
<dbReference type="HAMAP" id="MF_04068">
    <property type="entry name" value="INFV_M1"/>
    <property type="match status" value="1"/>
</dbReference>
<dbReference type="InterPro" id="IPR036039">
    <property type="entry name" value="Flu_matrix_M1"/>
</dbReference>
<dbReference type="InterPro" id="IPR013188">
    <property type="entry name" value="Flu_matrix_M1_C"/>
</dbReference>
<dbReference type="InterPro" id="IPR001561">
    <property type="entry name" value="Flu_matrix_M1_N"/>
</dbReference>
<dbReference type="InterPro" id="IPR015423">
    <property type="entry name" value="Flu_matrix_M1_N_sub1"/>
</dbReference>
<dbReference type="InterPro" id="IPR015799">
    <property type="entry name" value="Flu_matrix_M1_N_sub2"/>
</dbReference>
<dbReference type="InterPro" id="IPR037533">
    <property type="entry name" value="INFV_M1"/>
</dbReference>
<dbReference type="Pfam" id="PF00598">
    <property type="entry name" value="Flu_M1"/>
    <property type="match status" value="1"/>
</dbReference>
<dbReference type="Pfam" id="PF08289">
    <property type="entry name" value="Flu_M1_C"/>
    <property type="match status" value="1"/>
</dbReference>
<dbReference type="SMART" id="SM00759">
    <property type="entry name" value="Flu_M1_C"/>
    <property type="match status" value="1"/>
</dbReference>
<dbReference type="SUPFAM" id="SSF48145">
    <property type="entry name" value="Influenza virus matrix protein M1"/>
    <property type="match status" value="1"/>
</dbReference>
<evidence type="ECO:0000255" key="1">
    <source>
        <dbReference type="HAMAP-Rule" id="MF_04068"/>
    </source>
</evidence>
<protein>
    <recommendedName>
        <fullName evidence="1">Matrix protein 1</fullName>
        <shortName evidence="1">M1</shortName>
    </recommendedName>
</protein>